<organism>
    <name type="scientific">Leptolyngbya boryana</name>
    <name type="common">Plectonema boryanum</name>
    <dbReference type="NCBI Taxonomy" id="1184"/>
    <lineage>
        <taxon>Bacteria</taxon>
        <taxon>Bacillati</taxon>
        <taxon>Cyanobacteriota</taxon>
        <taxon>Cyanophyceae</taxon>
        <taxon>Leptolyngbyales</taxon>
        <taxon>Leptolyngbyaceae</taxon>
        <taxon>Leptolyngbya group</taxon>
        <taxon>Leptolyngbya</taxon>
    </lineage>
</organism>
<dbReference type="EC" id="1.15.1.1"/>
<dbReference type="EMBL" id="U17612">
    <property type="protein sequence ID" value="AAA69954.1"/>
    <property type="molecule type" value="Genomic_DNA"/>
</dbReference>
<dbReference type="SMR" id="P50061"/>
<dbReference type="GO" id="GO:0005737">
    <property type="term" value="C:cytoplasm"/>
    <property type="evidence" value="ECO:0007669"/>
    <property type="project" value="UniProtKB-SubCell"/>
</dbReference>
<dbReference type="GO" id="GO:0046872">
    <property type="term" value="F:metal ion binding"/>
    <property type="evidence" value="ECO:0007669"/>
    <property type="project" value="UniProtKB-KW"/>
</dbReference>
<dbReference type="GO" id="GO:0004784">
    <property type="term" value="F:superoxide dismutase activity"/>
    <property type="evidence" value="ECO:0007669"/>
    <property type="project" value="UniProtKB-EC"/>
</dbReference>
<dbReference type="FunFam" id="1.10.287.990:FF:000002">
    <property type="entry name" value="Superoxide dismutase"/>
    <property type="match status" value="1"/>
</dbReference>
<dbReference type="FunFam" id="3.55.40.20:FF:000001">
    <property type="entry name" value="Superoxide dismutase"/>
    <property type="match status" value="1"/>
</dbReference>
<dbReference type="Gene3D" id="1.10.287.990">
    <property type="entry name" value="Fe,Mn superoxide dismutase (SOD) domain"/>
    <property type="match status" value="1"/>
</dbReference>
<dbReference type="Gene3D" id="3.55.40.20">
    <property type="entry name" value="Iron/manganese superoxide dismutase, C-terminal domain"/>
    <property type="match status" value="1"/>
</dbReference>
<dbReference type="InterPro" id="IPR001189">
    <property type="entry name" value="Mn/Fe_SOD"/>
</dbReference>
<dbReference type="InterPro" id="IPR019833">
    <property type="entry name" value="Mn/Fe_SOD_BS"/>
</dbReference>
<dbReference type="InterPro" id="IPR019832">
    <property type="entry name" value="Mn/Fe_SOD_C"/>
</dbReference>
<dbReference type="InterPro" id="IPR019831">
    <property type="entry name" value="Mn/Fe_SOD_N"/>
</dbReference>
<dbReference type="InterPro" id="IPR036324">
    <property type="entry name" value="Mn/Fe_SOD_N_sf"/>
</dbReference>
<dbReference type="InterPro" id="IPR036314">
    <property type="entry name" value="SOD_C_sf"/>
</dbReference>
<dbReference type="PANTHER" id="PTHR42769">
    <property type="entry name" value="SUPEROXIDE DISMUTASE"/>
    <property type="match status" value="1"/>
</dbReference>
<dbReference type="PANTHER" id="PTHR42769:SF3">
    <property type="entry name" value="SUPEROXIDE DISMUTASE [FE] 2, CHLOROPLASTIC"/>
    <property type="match status" value="1"/>
</dbReference>
<dbReference type="Pfam" id="PF02777">
    <property type="entry name" value="Sod_Fe_C"/>
    <property type="match status" value="1"/>
</dbReference>
<dbReference type="Pfam" id="PF00081">
    <property type="entry name" value="Sod_Fe_N"/>
    <property type="match status" value="1"/>
</dbReference>
<dbReference type="PIRSF" id="PIRSF000349">
    <property type="entry name" value="SODismutase"/>
    <property type="match status" value="1"/>
</dbReference>
<dbReference type="PRINTS" id="PR01703">
    <property type="entry name" value="MNSODISMTASE"/>
</dbReference>
<dbReference type="SUPFAM" id="SSF54719">
    <property type="entry name" value="Fe,Mn superoxide dismutase (SOD), C-terminal domain"/>
    <property type="match status" value="1"/>
</dbReference>
<dbReference type="SUPFAM" id="SSF46609">
    <property type="entry name" value="Fe,Mn superoxide dismutase (SOD), N-terminal domain"/>
    <property type="match status" value="1"/>
</dbReference>
<dbReference type="PROSITE" id="PS00088">
    <property type="entry name" value="SOD_MN"/>
    <property type="match status" value="1"/>
</dbReference>
<accession>P50061</accession>
<keyword id="KW-0963">Cytoplasm</keyword>
<keyword id="KW-0408">Iron</keyword>
<keyword id="KW-0479">Metal-binding</keyword>
<keyword id="KW-0560">Oxidoreductase</keyword>
<evidence type="ECO:0000250" key="1"/>
<evidence type="ECO:0000305" key="2"/>
<sequence>MAFTQPPLPFPKDALEPYGMKAETFDYHYGKHHAAYVTNLNKLVEGTPMESLSLEDVIKQSFGDSSKVGVFNNAAQVWNHTFFWNCLKAGGGGAPTGELAAKIDAAFGSLDKFKEEFSNAAATQFGSGWAWLVDDGGTLKVTKTPNAENPLVHGQKPLLTLDVWEHAYYLDFQNARPAFIKNFLDNLVNWDFVAQNLAA</sequence>
<gene>
    <name type="primary">sodB</name>
</gene>
<proteinExistence type="evidence at transcript level"/>
<name>SODF_LEPBY</name>
<comment type="function">
    <text>Destroys superoxide anion radicals which are normally produced within the cells and which are toxic to biological systems.</text>
</comment>
<comment type="catalytic activity">
    <reaction>
        <text>2 superoxide + 2 H(+) = H2O2 + O2</text>
        <dbReference type="Rhea" id="RHEA:20696"/>
        <dbReference type="ChEBI" id="CHEBI:15378"/>
        <dbReference type="ChEBI" id="CHEBI:15379"/>
        <dbReference type="ChEBI" id="CHEBI:16240"/>
        <dbReference type="ChEBI" id="CHEBI:18421"/>
        <dbReference type="EC" id="1.15.1.1"/>
    </reaction>
</comment>
<comment type="cofactor">
    <cofactor evidence="1">
        <name>Fe cation</name>
        <dbReference type="ChEBI" id="CHEBI:24875"/>
    </cofactor>
    <text evidence="1">Binds 1 Fe cation per subunit.</text>
</comment>
<comment type="subunit">
    <text evidence="1">Homodimer.</text>
</comment>
<comment type="subcellular location">
    <subcellularLocation>
        <location evidence="2">Cytoplasm</location>
    </subcellularLocation>
</comment>
<comment type="induction">
    <text>Expressed constitutively, although partially repressed under conditions of iron stress.</text>
</comment>
<comment type="similarity">
    <text evidence="2">Belongs to the iron/manganese superoxide dismutase family.</text>
</comment>
<protein>
    <recommendedName>
        <fullName>Superoxide dismutase [Fe]</fullName>
        <ecNumber>1.15.1.1</ecNumber>
    </recommendedName>
</protein>
<reference key="1">
    <citation type="journal article" date="1995" name="J. Bacteriol.">
        <title>Characterization of four superoxide dismutase genes from a filamentous cyanobacterium.</title>
        <authorList>
            <person name="Campbell W.S."/>
            <person name="Laudenbach D.E."/>
        </authorList>
    </citation>
    <scope>NUCLEOTIDE SEQUENCE [GENOMIC DNA]</scope>
    <source>
        <strain>UTEX 485 / CCAP 1462/4</strain>
    </source>
</reference>
<feature type="chain" id="PRO_0000160065" description="Superoxide dismutase [Fe]">
    <location>
        <begin position="1"/>
        <end position="199"/>
    </location>
</feature>
<feature type="binding site" evidence="1">
    <location>
        <position position="28"/>
    </location>
    <ligand>
        <name>Fe cation</name>
        <dbReference type="ChEBI" id="CHEBI:24875"/>
    </ligand>
</feature>
<feature type="binding site" evidence="1">
    <location>
        <position position="80"/>
    </location>
    <ligand>
        <name>Fe cation</name>
        <dbReference type="ChEBI" id="CHEBI:24875"/>
    </ligand>
</feature>
<feature type="binding site" evidence="1">
    <location>
        <position position="162"/>
    </location>
    <ligand>
        <name>Fe cation</name>
        <dbReference type="ChEBI" id="CHEBI:24875"/>
    </ligand>
</feature>
<feature type="binding site" evidence="1">
    <location>
        <position position="166"/>
    </location>
    <ligand>
        <name>Fe cation</name>
        <dbReference type="ChEBI" id="CHEBI:24875"/>
    </ligand>
</feature>